<dbReference type="EMBL" id="CP000099">
    <property type="protein sequence ID" value="AAZ69854.1"/>
    <property type="molecule type" value="Genomic_DNA"/>
</dbReference>
<dbReference type="STRING" id="269797.Mbar_A0880"/>
<dbReference type="PaxDb" id="269797-Mbar_A0880"/>
<dbReference type="KEGG" id="mba:Mbar_A0880"/>
<dbReference type="eggNOG" id="arCOG03013">
    <property type="taxonomic scope" value="Archaea"/>
</dbReference>
<dbReference type="HOGENOM" id="CLU_052778_0_0_2"/>
<dbReference type="OrthoDB" id="46081at2157"/>
<dbReference type="GO" id="GO:1990077">
    <property type="term" value="C:primosome complex"/>
    <property type="evidence" value="ECO:0007669"/>
    <property type="project" value="UniProtKB-KW"/>
</dbReference>
<dbReference type="GO" id="GO:0051539">
    <property type="term" value="F:4 iron, 4 sulfur cluster binding"/>
    <property type="evidence" value="ECO:0007669"/>
    <property type="project" value="UniProtKB-UniRule"/>
</dbReference>
<dbReference type="GO" id="GO:0003899">
    <property type="term" value="F:DNA-directed RNA polymerase activity"/>
    <property type="evidence" value="ECO:0007669"/>
    <property type="project" value="InterPro"/>
</dbReference>
<dbReference type="GO" id="GO:0046872">
    <property type="term" value="F:metal ion binding"/>
    <property type="evidence" value="ECO:0007669"/>
    <property type="project" value="UniProtKB-KW"/>
</dbReference>
<dbReference type="GO" id="GO:0006270">
    <property type="term" value="P:DNA replication initiation"/>
    <property type="evidence" value="ECO:0007669"/>
    <property type="project" value="TreeGrafter"/>
</dbReference>
<dbReference type="GO" id="GO:0006269">
    <property type="term" value="P:DNA replication, synthesis of primer"/>
    <property type="evidence" value="ECO:0007669"/>
    <property type="project" value="UniProtKB-UniRule"/>
</dbReference>
<dbReference type="CDD" id="cd06560">
    <property type="entry name" value="PriL"/>
    <property type="match status" value="1"/>
</dbReference>
<dbReference type="HAMAP" id="MF_00701">
    <property type="entry name" value="DNA_primase_lrg_arc"/>
    <property type="match status" value="1"/>
</dbReference>
<dbReference type="InterPro" id="IPR007238">
    <property type="entry name" value="DNA_primase_lsu_euk/arc"/>
</dbReference>
<dbReference type="InterPro" id="IPR023642">
    <property type="entry name" value="DNA_primase_lsu_PriL"/>
</dbReference>
<dbReference type="NCBIfam" id="NF002588">
    <property type="entry name" value="PRK02249.1-2"/>
    <property type="match status" value="1"/>
</dbReference>
<dbReference type="PANTHER" id="PTHR10537">
    <property type="entry name" value="DNA PRIMASE LARGE SUBUNIT"/>
    <property type="match status" value="1"/>
</dbReference>
<dbReference type="PANTHER" id="PTHR10537:SF3">
    <property type="entry name" value="DNA PRIMASE LARGE SUBUNIT"/>
    <property type="match status" value="1"/>
</dbReference>
<dbReference type="Pfam" id="PF04104">
    <property type="entry name" value="DNA_primase_lrg"/>
    <property type="match status" value="1"/>
</dbReference>
<dbReference type="SUPFAM" id="SSF140914">
    <property type="entry name" value="PriB N-terminal domain-like"/>
    <property type="match status" value="1"/>
</dbReference>
<sequence>MDEEHIALYPFASEVSAYVESLRVSLESLLNSPAFRRSRVRGMERVMQSIEGEIETTLIKDESWLLSETLSYPFAQILVACVDDQLFTKRYALKEAEAASKWLEKESTDFLLEFGEDFGIQAEAEELQFSMHFADYIRFSSSIREPVWKLTNRQLRSGMVVVTKKDFVRLLQEAIKERIEKSFPIPKIPSEVSSFCAPYVAEIKDKFEVHKKKFGTTDFGVVEPDLFPPCISHALANVQGGVNLAHSMRFAMTSFLLSVGMSVDEILNLFNVSPDFDAEVTLYQIEHIAGATGNVYKPPACDTMRTYGNCIGKDRLCEKINHPLAYYEKKIYLKNKEKEMEKEKEEKEEKEKQEEKKEEEEKEKQEEIKKKKKKEKQEEKGKKIKEGKKRERKQEKETKRREGKEKQEEKKRI</sequence>
<name>PRIL_METBF</name>
<organism>
    <name type="scientific">Methanosarcina barkeri (strain Fusaro / DSM 804)</name>
    <dbReference type="NCBI Taxonomy" id="269797"/>
    <lineage>
        <taxon>Archaea</taxon>
        <taxon>Methanobacteriati</taxon>
        <taxon>Methanobacteriota</taxon>
        <taxon>Stenosarchaea group</taxon>
        <taxon>Methanomicrobia</taxon>
        <taxon>Methanosarcinales</taxon>
        <taxon>Methanosarcinaceae</taxon>
        <taxon>Methanosarcina</taxon>
    </lineage>
</organism>
<feature type="chain" id="PRO_0000225644" description="DNA primase large subunit PriL">
    <location>
        <begin position="1"/>
        <end position="413"/>
    </location>
</feature>
<feature type="region of interest" description="Disordered" evidence="2">
    <location>
        <begin position="340"/>
        <end position="413"/>
    </location>
</feature>
<feature type="compositionally biased region" description="Basic and acidic residues" evidence="2">
    <location>
        <begin position="340"/>
        <end position="356"/>
    </location>
</feature>
<feature type="compositionally biased region" description="Basic and acidic residues" evidence="2">
    <location>
        <begin position="362"/>
        <end position="381"/>
    </location>
</feature>
<feature type="compositionally biased region" description="Basic and acidic residues" evidence="2">
    <location>
        <begin position="388"/>
        <end position="413"/>
    </location>
</feature>
<feature type="binding site" evidence="1">
    <location>
        <position position="230"/>
    </location>
    <ligand>
        <name>[4Fe-4S] cluster</name>
        <dbReference type="ChEBI" id="CHEBI:49883"/>
    </ligand>
</feature>
<feature type="binding site" evidence="1">
    <location>
        <position position="301"/>
    </location>
    <ligand>
        <name>[4Fe-4S] cluster</name>
        <dbReference type="ChEBI" id="CHEBI:49883"/>
    </ligand>
</feature>
<feature type="binding site" evidence="1">
    <location>
        <position position="310"/>
    </location>
    <ligand>
        <name>[4Fe-4S] cluster</name>
        <dbReference type="ChEBI" id="CHEBI:49883"/>
    </ligand>
</feature>
<feature type="binding site" evidence="1">
    <location>
        <position position="317"/>
    </location>
    <ligand>
        <name>[4Fe-4S] cluster</name>
        <dbReference type="ChEBI" id="CHEBI:49883"/>
    </ligand>
</feature>
<proteinExistence type="inferred from homology"/>
<keyword id="KW-0004">4Fe-4S</keyword>
<keyword id="KW-0235">DNA replication</keyword>
<keyword id="KW-0408">Iron</keyword>
<keyword id="KW-0411">Iron-sulfur</keyword>
<keyword id="KW-0479">Metal-binding</keyword>
<keyword id="KW-0639">Primosome</keyword>
<reference key="1">
    <citation type="journal article" date="2006" name="J. Bacteriol.">
        <title>The Methanosarcina barkeri genome: comparative analysis with Methanosarcina acetivorans and Methanosarcina mazei reveals extensive rearrangement within methanosarcinal genomes.</title>
        <authorList>
            <person name="Maeder D.L."/>
            <person name="Anderson I."/>
            <person name="Brettin T.S."/>
            <person name="Bruce D.C."/>
            <person name="Gilna P."/>
            <person name="Han C.S."/>
            <person name="Lapidus A."/>
            <person name="Metcalf W.W."/>
            <person name="Saunders E."/>
            <person name="Tapia R."/>
            <person name="Sowers K.R."/>
        </authorList>
    </citation>
    <scope>NUCLEOTIDE SEQUENCE [LARGE SCALE GENOMIC DNA]</scope>
    <source>
        <strain>Fusaro / DSM 804</strain>
    </source>
</reference>
<protein>
    <recommendedName>
        <fullName evidence="1">DNA primase large subunit PriL</fullName>
    </recommendedName>
</protein>
<evidence type="ECO:0000255" key="1">
    <source>
        <dbReference type="HAMAP-Rule" id="MF_00701"/>
    </source>
</evidence>
<evidence type="ECO:0000256" key="2">
    <source>
        <dbReference type="SAM" id="MobiDB-lite"/>
    </source>
</evidence>
<comment type="function">
    <text evidence="1">Regulatory subunit of DNA primase, an RNA polymerase that catalyzes the synthesis of short RNA molecules used as primers for DNA polymerase during DNA replication. Stabilizes and modulates the activity of the small subunit, increasing the rate of DNA synthesis, and conferring RNA synthesis capability. The DNA polymerase activity may enable DNA primase to also catalyze primer extension after primer synthesis. May also play a role in DNA repair.</text>
</comment>
<comment type="cofactor">
    <cofactor evidence="1">
        <name>[4Fe-4S] cluster</name>
        <dbReference type="ChEBI" id="CHEBI:49883"/>
    </cofactor>
    <text evidence="1">Binds 1 [4Fe-4S] cluster.</text>
</comment>
<comment type="subunit">
    <text evidence="1">Heterodimer of a small subunit (PriS) and a large subunit (PriL).</text>
</comment>
<comment type="similarity">
    <text evidence="1">Belongs to the eukaryotic-type primase large subunit family.</text>
</comment>
<gene>
    <name evidence="1" type="primary">priL</name>
    <name type="synonym">priB</name>
    <name type="ordered locus">Mbar_A0880</name>
</gene>
<accession>Q46E38</accession>